<reference key="1">
    <citation type="journal article" date="2005" name="Genome Res.">
        <title>Comparative and functional genomic analyses of the pathogenicity of phytopathogen Xanthomonas campestris pv. campestris.</title>
        <authorList>
            <person name="Qian W."/>
            <person name="Jia Y."/>
            <person name="Ren S.-X."/>
            <person name="He Y.-Q."/>
            <person name="Feng J.-X."/>
            <person name="Lu L.-F."/>
            <person name="Sun Q."/>
            <person name="Ying G."/>
            <person name="Tang D.-J."/>
            <person name="Tang H."/>
            <person name="Wu W."/>
            <person name="Hao P."/>
            <person name="Wang L."/>
            <person name="Jiang B.-L."/>
            <person name="Zeng S."/>
            <person name="Gu W.-Y."/>
            <person name="Lu G."/>
            <person name="Rong L."/>
            <person name="Tian Y."/>
            <person name="Yao Z."/>
            <person name="Fu G."/>
            <person name="Chen B."/>
            <person name="Fang R."/>
            <person name="Qiang B."/>
            <person name="Chen Z."/>
            <person name="Zhao G.-P."/>
            <person name="Tang J.-L."/>
            <person name="He C."/>
        </authorList>
    </citation>
    <scope>NUCLEOTIDE SEQUENCE [LARGE SCALE GENOMIC DNA]</scope>
    <source>
        <strain>8004</strain>
    </source>
</reference>
<proteinExistence type="inferred from homology"/>
<comment type="function">
    <text evidence="1">NAD-binding protein involved in the addition of a carboxymethylaminomethyl (cmnm) group at the wobble position (U34) of certain tRNAs, forming tRNA-cmnm(5)s(2)U34.</text>
</comment>
<comment type="cofactor">
    <cofactor evidence="1">
        <name>FAD</name>
        <dbReference type="ChEBI" id="CHEBI:57692"/>
    </cofactor>
</comment>
<comment type="subunit">
    <text evidence="1">Homodimer. Heterotetramer of two MnmE and two MnmG subunits.</text>
</comment>
<comment type="subcellular location">
    <subcellularLocation>
        <location evidence="1">Cytoplasm</location>
    </subcellularLocation>
</comment>
<comment type="similarity">
    <text evidence="1">Belongs to the MnmG family.</text>
</comment>
<sequence length="634" mass="68879">MSDSFYRYDVIVIGGGHAGTEAALAAARAGARTLLLTHNIETVGAMSCNPAIGGIGKGHLVKEIDALGGAMAKAADLAGIQWRTLNASKGPAVRATRCQADRNLYRSAIRRIVEAQPNLTVFQAAVDDLIIHNGAAEGDSVRGVITQTGLRFEATAVVLTAGTFLAGKIHVGETQYAAGRMGDPPATTLAARLRERPFAIDRLKTGTPPRIDGRTLDYTMMDEQPGDDPLPVMSFMGQVSDHPTQVSCWITHTTEQTHDIIRGALHRSPLYSGQIEGIGPRYCPSIEDKVVRFADKTSHQIFVEPEGLDVTEIYPNGISTSLPFDVQLALVRSIRGFAQAHITRPGYAIEYDFFDPRGLKASLETKAVGGLFFAGQINGTTGYEEAAAQGLLAGLNAARQAQALPAWSPRRDEAYLGVLVDDLITHGTTEPYRMFTSRAEYRLQLREDNADLRLTGVGRAMGLVDDARWARFSSKQEAVQRETARLSALWATPGNALGREVVDTLGVPMSRETNVLDLIKRPELSYAALMRVPTLGPGVDDAQVAEQVEIGVKYAGYLNRQRDEIARQQRHETTPIPEGFDYAGVRGLSMEVQQKLERVRPQSIGQAQRIPGMTPAAISLLLVHLERARRSQVA</sequence>
<dbReference type="EMBL" id="CP000050">
    <property type="protein sequence ID" value="AAY47474.1"/>
    <property type="molecule type" value="Genomic_DNA"/>
</dbReference>
<dbReference type="RefSeq" id="WP_011035631.1">
    <property type="nucleotide sequence ID" value="NZ_CP155948.1"/>
</dbReference>
<dbReference type="SMR" id="Q4UZP9"/>
<dbReference type="KEGG" id="xcb:XC_0389"/>
<dbReference type="HOGENOM" id="CLU_007831_2_2_6"/>
<dbReference type="Proteomes" id="UP000000420">
    <property type="component" value="Chromosome"/>
</dbReference>
<dbReference type="GO" id="GO:0005829">
    <property type="term" value="C:cytosol"/>
    <property type="evidence" value="ECO:0007669"/>
    <property type="project" value="TreeGrafter"/>
</dbReference>
<dbReference type="GO" id="GO:0050660">
    <property type="term" value="F:flavin adenine dinucleotide binding"/>
    <property type="evidence" value="ECO:0007669"/>
    <property type="project" value="UniProtKB-UniRule"/>
</dbReference>
<dbReference type="GO" id="GO:0030488">
    <property type="term" value="P:tRNA methylation"/>
    <property type="evidence" value="ECO:0007669"/>
    <property type="project" value="TreeGrafter"/>
</dbReference>
<dbReference type="GO" id="GO:0002098">
    <property type="term" value="P:tRNA wobble uridine modification"/>
    <property type="evidence" value="ECO:0007669"/>
    <property type="project" value="InterPro"/>
</dbReference>
<dbReference type="FunFam" id="1.10.10.1800:FF:000001">
    <property type="entry name" value="tRNA uridine 5-carboxymethylaminomethyl modification enzyme MnmG"/>
    <property type="match status" value="1"/>
</dbReference>
<dbReference type="FunFam" id="1.10.150.570:FF:000001">
    <property type="entry name" value="tRNA uridine 5-carboxymethylaminomethyl modification enzyme MnmG"/>
    <property type="match status" value="1"/>
</dbReference>
<dbReference type="FunFam" id="3.50.50.60:FF:000002">
    <property type="entry name" value="tRNA uridine 5-carboxymethylaminomethyl modification enzyme MnmG"/>
    <property type="match status" value="1"/>
</dbReference>
<dbReference type="FunFam" id="3.50.50.60:FF:000010">
    <property type="entry name" value="tRNA uridine 5-carboxymethylaminomethyl modification enzyme MnmG"/>
    <property type="match status" value="1"/>
</dbReference>
<dbReference type="Gene3D" id="3.50.50.60">
    <property type="entry name" value="FAD/NAD(P)-binding domain"/>
    <property type="match status" value="2"/>
</dbReference>
<dbReference type="Gene3D" id="1.10.150.570">
    <property type="entry name" value="GidA associated domain, C-terminal subdomain"/>
    <property type="match status" value="1"/>
</dbReference>
<dbReference type="Gene3D" id="1.10.10.1800">
    <property type="entry name" value="tRNA uridine 5-carboxymethylaminomethyl modification enzyme MnmG/GidA"/>
    <property type="match status" value="1"/>
</dbReference>
<dbReference type="HAMAP" id="MF_00129">
    <property type="entry name" value="MnmG_GidA"/>
    <property type="match status" value="1"/>
</dbReference>
<dbReference type="InterPro" id="IPR036188">
    <property type="entry name" value="FAD/NAD-bd_sf"/>
</dbReference>
<dbReference type="InterPro" id="IPR049312">
    <property type="entry name" value="GIDA_C_N"/>
</dbReference>
<dbReference type="InterPro" id="IPR004416">
    <property type="entry name" value="MnmG"/>
</dbReference>
<dbReference type="InterPro" id="IPR002218">
    <property type="entry name" value="MnmG-rel"/>
</dbReference>
<dbReference type="InterPro" id="IPR020595">
    <property type="entry name" value="MnmG-rel_CS"/>
</dbReference>
<dbReference type="InterPro" id="IPR026904">
    <property type="entry name" value="MnmG_C"/>
</dbReference>
<dbReference type="InterPro" id="IPR047001">
    <property type="entry name" value="MnmG_C_subdom"/>
</dbReference>
<dbReference type="InterPro" id="IPR044920">
    <property type="entry name" value="MnmG_C_subdom_sf"/>
</dbReference>
<dbReference type="InterPro" id="IPR040131">
    <property type="entry name" value="MnmG_N"/>
</dbReference>
<dbReference type="NCBIfam" id="TIGR00136">
    <property type="entry name" value="mnmG_gidA"/>
    <property type="match status" value="1"/>
</dbReference>
<dbReference type="PANTHER" id="PTHR11806">
    <property type="entry name" value="GLUCOSE INHIBITED DIVISION PROTEIN A"/>
    <property type="match status" value="1"/>
</dbReference>
<dbReference type="PANTHER" id="PTHR11806:SF0">
    <property type="entry name" value="PROTEIN MTO1 HOMOLOG, MITOCHONDRIAL"/>
    <property type="match status" value="1"/>
</dbReference>
<dbReference type="Pfam" id="PF01134">
    <property type="entry name" value="GIDA"/>
    <property type="match status" value="1"/>
</dbReference>
<dbReference type="Pfam" id="PF21680">
    <property type="entry name" value="GIDA_C_1st"/>
    <property type="match status" value="1"/>
</dbReference>
<dbReference type="Pfam" id="PF13932">
    <property type="entry name" value="SAM_GIDA_C"/>
    <property type="match status" value="1"/>
</dbReference>
<dbReference type="PRINTS" id="PR00469">
    <property type="entry name" value="PNDRDTASEII"/>
</dbReference>
<dbReference type="SMART" id="SM01228">
    <property type="entry name" value="GIDA_assoc_3"/>
    <property type="match status" value="1"/>
</dbReference>
<dbReference type="SUPFAM" id="SSF51905">
    <property type="entry name" value="FAD/NAD(P)-binding domain"/>
    <property type="match status" value="1"/>
</dbReference>
<dbReference type="PROSITE" id="PS01280">
    <property type="entry name" value="GIDA_1"/>
    <property type="match status" value="1"/>
</dbReference>
<dbReference type="PROSITE" id="PS01281">
    <property type="entry name" value="GIDA_2"/>
    <property type="match status" value="1"/>
</dbReference>
<name>MNMG_XANC8</name>
<protein>
    <recommendedName>
        <fullName evidence="1">tRNA uridine 5-carboxymethylaminomethyl modification enzyme MnmG</fullName>
    </recommendedName>
    <alternativeName>
        <fullName evidence="1">Glucose-inhibited division protein A</fullName>
    </alternativeName>
</protein>
<gene>
    <name evidence="1" type="primary">mnmG</name>
    <name evidence="1" type="synonym">gidA</name>
    <name type="ordered locus">XC_0389</name>
</gene>
<accession>Q4UZP9</accession>
<organism>
    <name type="scientific">Xanthomonas campestris pv. campestris (strain 8004)</name>
    <dbReference type="NCBI Taxonomy" id="314565"/>
    <lineage>
        <taxon>Bacteria</taxon>
        <taxon>Pseudomonadati</taxon>
        <taxon>Pseudomonadota</taxon>
        <taxon>Gammaproteobacteria</taxon>
        <taxon>Lysobacterales</taxon>
        <taxon>Lysobacteraceae</taxon>
        <taxon>Xanthomonas</taxon>
    </lineage>
</organism>
<feature type="chain" id="PRO_0000117219" description="tRNA uridine 5-carboxymethylaminomethyl modification enzyme MnmG">
    <location>
        <begin position="1"/>
        <end position="634"/>
    </location>
</feature>
<feature type="binding site" evidence="1">
    <location>
        <begin position="14"/>
        <end position="19"/>
    </location>
    <ligand>
        <name>FAD</name>
        <dbReference type="ChEBI" id="CHEBI:57692"/>
    </ligand>
</feature>
<feature type="binding site" evidence="1">
    <location>
        <begin position="279"/>
        <end position="293"/>
    </location>
    <ligand>
        <name>NAD(+)</name>
        <dbReference type="ChEBI" id="CHEBI:57540"/>
    </ligand>
</feature>
<keyword id="KW-0963">Cytoplasm</keyword>
<keyword id="KW-0274">FAD</keyword>
<keyword id="KW-0285">Flavoprotein</keyword>
<keyword id="KW-0520">NAD</keyword>
<keyword id="KW-0819">tRNA processing</keyword>
<evidence type="ECO:0000255" key="1">
    <source>
        <dbReference type="HAMAP-Rule" id="MF_00129"/>
    </source>
</evidence>